<accession>P48734</accession>
<accession>Q2YDM6</accession>
<sequence>MEDYTKIEKIGEGTYGVVYKGRHKTTGQVVAMKKIRLESEEEGVPSTAIREISLLKELRHPNIVSLQDVLMQDSRLYLIFEFLSMDLKKYLDSIPPGQFMDSSLVKSYLYQILQGIVFCHSRRVLHRDLKPQNLLIDDKGTIKLADFGLARAFGIPIRVYTHEVVTLWYRSPEVLLGSARYSTPVDIWSIGTIFAELATKKPLFHGDSEIDQLFRIFRALGTPNNEVWPEVESLQDYKSTFPKWKPGSLASHVKNLDENGLDLLSKMLIYDPAKRISGKMALNHPYFNDLDSQIKKM</sequence>
<protein>
    <recommendedName>
        <fullName>Cyclin-dependent kinase 1</fullName>
        <shortName>CDK1</shortName>
        <ecNumber evidence="1">2.7.11.22</ecNumber>
        <ecNumber evidence="2">2.7.11.23</ecNumber>
    </recommendedName>
    <alternativeName>
        <fullName>Cell division control protein 2 homolog</fullName>
    </alternativeName>
    <alternativeName>
        <fullName>Cell division protein kinase 1</fullName>
    </alternativeName>
    <alternativeName>
        <fullName>p34 protein kinase</fullName>
    </alternativeName>
</protein>
<proteinExistence type="evidence at transcript level"/>
<comment type="function">
    <text evidence="1 2 3">Plays a key role in the control of the eukaryotic cell cycle by modulating the centrosome cycle as well as mitotic onset; promotes G2-M transition via association with multiple interphase cyclins. Phosphorylates PARVA/actopaxin, APC, AMPH, APC, BARD1, Bcl-xL/BCL2L1, BRCA2, CALD1, CASP8, CDC7, CDC20, CDC25A, CDC25C, CC2D1A, CENPA, CSNK2 proteins/CKII, FZR1/CDH1, CDK7, CEBPB, CHAMP1, DMD/dystrophin, EEF1 proteins/EF-1, EZH2, KIF11/EG5, EGFR, FANCG, FOS, GFAP, GOLGA2/GM130, GRASP1, UBE2A/hHR6A, HIST1H1 proteins/histone H1, HMGA1, HIVEP3/KRC, KAT5, LMNA, LMNB, LBR, LATS1, MAP1B, MAP4, MARCKS, MCM2, MCM4, MKLP1, MLST8, MYB, NEFH, NFIC, NPC/nuclear pore complex, PITPNM1/NIR2, NPM1, NCL, NUCKS1, NPM1/numatrin, ORC1, PRKAR2A, EEF1E1/p18, EIF3F/p47, p53/TP53, NONO/p54NRB, PAPOLA, PLEC/plectin, RB1, TPPP, UL40/R2, RAB4A, RAP1GAP, RBBP8/CtIP, RCC1, RPS6KB1/S6K1, KHDRBS1/SAM68, ESPL1, SKI, BIRC5/survivin, STIP1, TEX14, beta-tubulins, MAPT/TAU, NEDD1, VIM/vimentin, TK1, FOXO1, RUNX1/AML1, SAMHD1, SIRT2, CGAS and RUNX2. CDK1/CDC2-cyclin-B controls pronuclear union in interphase fertilized eggs. Essential for early stages of embryonic development. During G2 and early mitosis, CDC25A/B/C-mediated dephosphorylation activates CDK1/cyclin complexes which phosphorylate several substrates that trigger at least centrosome separation, Golgi dynamics, nuclear envelope breakdown and chromosome condensation. Once chromosomes are condensed and aligned at the metaphase plate, CDK1 activity is switched off by WEE1- and PKMYT1-mediated phosphorylation to allow sister chromatid separation, chromosome decondensation, reformation of the nuclear envelope and cytokinesis. Phosphorylates KRT5 during prometaphase and metaphase (By similarity). Inactivated by PKR/EIF2AK2- and WEE1-mediated phosphorylation upon DNA damage to stop cell cycle and genome replication at the G2 checkpoint thus facilitating DNA repair. Reactivated after successful DNA repair through WIP1-dependent signaling leading to CDC25A/B/C-mediated dephosphorylation and restoring cell cycle progression. Catalyzes lamin (LMNA, LMNB1 and LMNB2) phosphorylation at the onset of mitosis, promoting nuclear envelope breakdown. In proliferating cells, CDK1-mediated FOXO1 phosphorylation at the G2-M phase represses FOXO1 interaction with 14-3-3 proteins and thereby promotes FOXO1 nuclear accumulation and transcription factor activity, leading to cell death of postmitotic neurons. The phosphorylation of beta-tubulins regulates microtubule dynamics during mitosis. NEDD1 phosphorylation promotes PLK1-mediated NEDD1 phosphorylation and subsequent targeting of the gamma-tubulin ring complex (gTuRC) to the centrosome, an important step for spindle formation. In addition, CC2D1A phosphorylation regulates CC2D1A spindle pole localization and association with SCC1/RAD21 and centriole cohesion during mitosis. The phosphorylation of Bcl-xL/BCL2L1 after prolongated G2 arrest upon DNA damage triggers apoptosis. In contrast, CASP8 phosphorylation during mitosis prevents its activation by proteolysis and subsequent apoptosis. This phosphorylation occurs in cancer cell lines, as well as in primary breast tissues and lymphocytes. EZH2 phosphorylation promotes H3K27me3 maintenance and epigenetic gene silencing. CALD1 phosphorylation promotes Schwann cell migration during peripheral nerve regeneration. CDK1-cyclin-B complex phosphorylates NCKAP5L and mediates its dissociation from centrosomes during mitosis. Regulates the amplitude of the cyclic expression of the core clock gene BMAL1 by phosphorylating its transcriptional repressor NR1D1, and this phosphorylation is necessary for SCF(FBXW7)-mediated ubiquitination and proteasomal degradation of NR1D1 (By similarity). Phosphorylates EML3 at 'Thr-881' which is essential for its interaction with HAUS augmin-like complex and TUBG1 (By similarity). Phosphorylates CGAS during mitosis, leading to its inhibition, thereby preventing CGAS activation by self DNA during mitosis (By similarity). Phosphorylates SKA3 during mitosis which promotes SKA3 binding to the NDC80 complex and anchoring of the SKA complex to kinetochores, to enable stable attachment of mitotic spindle microtubules to kinetochores (By similarity).</text>
</comment>
<comment type="catalytic activity">
    <reaction evidence="1">
        <text>L-seryl-[protein] + ATP = O-phospho-L-seryl-[protein] + ADP + H(+)</text>
        <dbReference type="Rhea" id="RHEA:17989"/>
        <dbReference type="Rhea" id="RHEA-COMP:9863"/>
        <dbReference type="Rhea" id="RHEA-COMP:11604"/>
        <dbReference type="ChEBI" id="CHEBI:15378"/>
        <dbReference type="ChEBI" id="CHEBI:29999"/>
        <dbReference type="ChEBI" id="CHEBI:30616"/>
        <dbReference type="ChEBI" id="CHEBI:83421"/>
        <dbReference type="ChEBI" id="CHEBI:456216"/>
        <dbReference type="EC" id="2.7.11.22"/>
    </reaction>
</comment>
<comment type="catalytic activity">
    <reaction evidence="1">
        <text>L-threonyl-[protein] + ATP = O-phospho-L-threonyl-[protein] + ADP + H(+)</text>
        <dbReference type="Rhea" id="RHEA:46608"/>
        <dbReference type="Rhea" id="RHEA-COMP:11060"/>
        <dbReference type="Rhea" id="RHEA-COMP:11605"/>
        <dbReference type="ChEBI" id="CHEBI:15378"/>
        <dbReference type="ChEBI" id="CHEBI:30013"/>
        <dbReference type="ChEBI" id="CHEBI:30616"/>
        <dbReference type="ChEBI" id="CHEBI:61977"/>
        <dbReference type="ChEBI" id="CHEBI:456216"/>
        <dbReference type="EC" id="2.7.11.22"/>
    </reaction>
</comment>
<comment type="catalytic activity">
    <reaction evidence="2">
        <text>[DNA-directed RNA polymerase] + ATP = phospho-[DNA-directed RNA polymerase] + ADP + H(+)</text>
        <dbReference type="Rhea" id="RHEA:10216"/>
        <dbReference type="Rhea" id="RHEA-COMP:11321"/>
        <dbReference type="Rhea" id="RHEA-COMP:11322"/>
        <dbReference type="ChEBI" id="CHEBI:15378"/>
        <dbReference type="ChEBI" id="CHEBI:30616"/>
        <dbReference type="ChEBI" id="CHEBI:43176"/>
        <dbReference type="ChEBI" id="CHEBI:68546"/>
        <dbReference type="ChEBI" id="CHEBI:456216"/>
        <dbReference type="EC" id="2.7.11.23"/>
    </reaction>
</comment>
<comment type="activity regulation">
    <text evidence="1">Phosphorylation at Thr-14 or Tyr-15 inactivates the enzyme, while phosphorylation at Thr-161 activates it. Activated through a multistep process; binding to cyclin-B is required for relocation of cyclin-kinase complexes to the nucleus, activated by CAK/CDK7-mediated phosphorylation on Thr-161, and CDC25-mediated dephosphorylation of inhibitory phosphorylation on Thr-14 and Tyr-15. Activity is restricted during S-phase in an ATR-dependent manner to prevent premature entry into G2. Repressed by the CDK inhibitors CDKN1A/p21 and CDKN1B/p27 during the G1 phase and by CDKN1A/p21 at the G1-S checkpoint upon DNA damage. Transient activation by rapid and transient dephosphorylation at Tyr-15 triggered by TGFB1.</text>
</comment>
<comment type="subunit">
    <text evidence="1">Forms a stable but non-covalent complex with a regulatory subunit and with a cyclin. Interacts with cyclins-B (CCNB1, CCNB2 and CCNB3) to form a serine/threonine kinase holoenzyme complex also known as maturation promoting factor (MPF). The cyclin subunit imparts substrate specificity to the complex. Can also form CDK1-cylin-D and CDK1-cyclin-E complexes that phosphorylate RB1 in vitro. Binds to RB1 and other transcription factors such as FOXO1 and RUNX2. Promotes G2-M transition when in complex with a cyclin-B. Interacts with DLGAP5. Binds to the CDK inhibitors CDKN1A/p21 and CDKN1B/p27. Isoform 2 is unable to complex with cyclin-B1 and also fails to bind to CDKN1A/p21. Interacts with catalytically active CCNB1 and RALBP1 during mitosis to form an endocytotic complex during interphase. Associates with cyclins-A and B1 during S-phase in regenerating hepatocytes. Interacts with FANCC. Interacts with CEP63; this interaction recruits CDK1 to centrosomes. Interacts with CENPA. Interacts with NR1D1 (By similarity).</text>
</comment>
<comment type="subcellular location">
    <subcellularLocation>
        <location evidence="2">Nucleus</location>
    </subcellularLocation>
    <subcellularLocation>
        <location evidence="2">Cytoplasm</location>
    </subcellularLocation>
    <subcellularLocation>
        <location evidence="2">Mitochondrion</location>
    </subcellularLocation>
    <subcellularLocation>
        <location evidence="1">Cytoplasm</location>
        <location evidence="1">Cytoskeleton</location>
        <location evidence="1">Microtubule organizing center</location>
        <location evidence="1">Centrosome</location>
    </subcellularLocation>
    <subcellularLocation>
        <location evidence="1">Cytoplasm</location>
        <location evidence="1">Cytoskeleton</location>
        <location evidence="1">Spindle</location>
    </subcellularLocation>
    <text evidence="1">Colocalizes with SIRT2 on centrosome during prophase and on splindle fibers during metaphase of the mitotic cell cycle (By similarity). Cytoplasmic during the interphase. Reversibly translocated from cytoplasm to nucleus when phosphorylated before G2-M transition when associated with cyclin-B1. Accumulates in mitochondria in G2-arrested cells upon DNA-damage.</text>
</comment>
<comment type="induction">
    <text evidence="6">Follow a cyclic expression; during interphase, accumulates gradually following G1, S to reach a critical threshold at the end of G2, which promotes self-activation and triggers onset of mitosis. Induced transiently by TGFB1 at an early phase of TGFB1-mediated apoptosis (Probable).</text>
</comment>
<comment type="PTM">
    <text evidence="1">Phosphorylation at Thr-161 by CAK/CDK7 activates kinase activity. Phosphorylation at Thr-14 and Tyr-15 by PKMYT1 prevents nuclear translocation. Phosphorylation at Tyr-15 by WEE1 and WEE2 inhibits the protein kinase activity and acts as a negative regulator of entry into mitosis (G2 to M transition). Phosphorylation by PKMYT1 and WEE1 takes place during mitosis to keep CDK1-cyclin-B complexes inactive until the end of G2. By the end of G2, PKMYT1 and WEE1 are inactivated, but CDC25A and CDC25B are activated. Dephosphorylation by active CDC25A and CDC25B at Thr-14 and Tyr-15, leads to CDK1 activation at the G2-M transition. Phosphorylation at Tyr-15 by WEE2 during oogenesis is required to maintain meiotic arrest in oocytes during the germinal vesicle (GV) stage, a long period of quiescence at dictyate prophase I, leading to prevent meiotic reentry. Phosphorylation by WEE2 is also required for metaphase II exit during egg activation to ensure exit from meiosis in oocytes and promote pronuclear formation. Phosphorylated at Tyr-4 by PKR/EIF2AK2 upon genotoxic stress. This phosphorylation triggers CDK1 polyubiquitination and subsequent proteolysis, thus leading to G2 arrest (By similarity).</text>
</comment>
<comment type="PTM">
    <text evidence="1">Polyubiquitinated upon genotoxic stress.</text>
</comment>
<comment type="similarity">
    <text evidence="6">Belongs to the protein kinase superfamily. CMGC Ser/Thr protein kinase family. CDC2/CDKX subfamily.</text>
</comment>
<evidence type="ECO:0000250" key="1">
    <source>
        <dbReference type="UniProtKB" id="P06493"/>
    </source>
</evidence>
<evidence type="ECO:0000250" key="2">
    <source>
        <dbReference type="UniProtKB" id="P11440"/>
    </source>
</evidence>
<evidence type="ECO:0000250" key="3">
    <source>
        <dbReference type="UniProtKB" id="P39951"/>
    </source>
</evidence>
<evidence type="ECO:0000255" key="4">
    <source>
        <dbReference type="PROSITE-ProRule" id="PRU00159"/>
    </source>
</evidence>
<evidence type="ECO:0000255" key="5">
    <source>
        <dbReference type="PROSITE-ProRule" id="PRU10027"/>
    </source>
</evidence>
<evidence type="ECO:0000305" key="6"/>
<organism>
    <name type="scientific">Bos taurus</name>
    <name type="common">Bovine</name>
    <dbReference type="NCBI Taxonomy" id="9913"/>
    <lineage>
        <taxon>Eukaryota</taxon>
        <taxon>Metazoa</taxon>
        <taxon>Chordata</taxon>
        <taxon>Craniata</taxon>
        <taxon>Vertebrata</taxon>
        <taxon>Euteleostomi</taxon>
        <taxon>Mammalia</taxon>
        <taxon>Eutheria</taxon>
        <taxon>Laurasiatheria</taxon>
        <taxon>Artiodactyla</taxon>
        <taxon>Ruminantia</taxon>
        <taxon>Pecora</taxon>
        <taxon>Bovidae</taxon>
        <taxon>Bovinae</taxon>
        <taxon>Bos</taxon>
    </lineage>
</organism>
<feature type="chain" id="PRO_0000085723" description="Cyclin-dependent kinase 1">
    <location>
        <begin position="1"/>
        <end position="297"/>
    </location>
</feature>
<feature type="domain" description="Protein kinase" evidence="4">
    <location>
        <begin position="4"/>
        <end position="287"/>
    </location>
</feature>
<feature type="active site" description="Proton acceptor" evidence="4 5">
    <location>
        <position position="128"/>
    </location>
</feature>
<feature type="binding site" evidence="4">
    <location>
        <begin position="10"/>
        <end position="18"/>
    </location>
    <ligand>
        <name>ATP</name>
        <dbReference type="ChEBI" id="CHEBI:30616"/>
    </ligand>
</feature>
<feature type="binding site" evidence="4">
    <location>
        <position position="33"/>
    </location>
    <ligand>
        <name>ATP</name>
        <dbReference type="ChEBI" id="CHEBI:30616"/>
    </ligand>
</feature>
<feature type="modified residue" description="N-acetylmethionine" evidence="1">
    <location>
        <position position="1"/>
    </location>
</feature>
<feature type="modified residue" description="Phosphotyrosine; by PKR" evidence="1">
    <location>
        <position position="4"/>
    </location>
</feature>
<feature type="modified residue" description="N6-acetyllysine; alternate" evidence="1">
    <location>
        <position position="6"/>
    </location>
</feature>
<feature type="modified residue" description="N6-acetyllysine; alternate" evidence="2">
    <location>
        <position position="9"/>
    </location>
</feature>
<feature type="modified residue" description="Phosphothreonine; by PKMYT1" evidence="1">
    <location>
        <position position="14"/>
    </location>
</feature>
<feature type="modified residue" description="Phosphotyrosine; by PKMYT1, WEE1 and WEE2" evidence="1">
    <location>
        <position position="15"/>
    </location>
</feature>
<feature type="modified residue" description="Phosphotyrosine; by WEE1 and WEE2" evidence="1">
    <location>
        <position position="15"/>
    </location>
</feature>
<feature type="modified residue" description="Phosphotyrosine" evidence="1">
    <location>
        <position position="19"/>
    </location>
</feature>
<feature type="modified residue" description="Phosphoserine" evidence="1">
    <location>
        <position position="39"/>
    </location>
</feature>
<feature type="modified residue" description="Phosphotyrosine" evidence="1">
    <location>
        <position position="77"/>
    </location>
</feature>
<feature type="modified residue" description="Phosphothreonine" evidence="1">
    <location>
        <position position="141"/>
    </location>
</feature>
<feature type="modified residue" description="Phosphothreonine; by CAK" evidence="1">
    <location>
        <position position="161"/>
    </location>
</feature>
<feature type="modified residue" description="Phosphoserine" evidence="1">
    <location>
        <position position="178"/>
    </location>
</feature>
<feature type="modified residue" description="Phosphothreonine" evidence="1">
    <location>
        <position position="222"/>
    </location>
</feature>
<feature type="modified residue" description="N6-succinyllysine" evidence="2">
    <location>
        <position position="245"/>
    </location>
</feature>
<feature type="modified residue" description="Phosphoserine" evidence="1">
    <location>
        <position position="248"/>
    </location>
</feature>
<feature type="cross-link" description="Glycyl lysine isopeptide (Lys-Gly) (interchain with G-Cter in SUMO2); alternate" evidence="1">
    <location>
        <position position="6"/>
    </location>
</feature>
<feature type="cross-link" description="Glycyl lysine isopeptide (Lys-Gly) (interchain with G-Cter in SUMO2); alternate" evidence="1">
    <location>
        <position position="9"/>
    </location>
</feature>
<feature type="cross-link" description="Glycyl lysine isopeptide (Lys-Gly) (interchain with G-Cter in SUMO2)" evidence="1">
    <location>
        <position position="20"/>
    </location>
</feature>
<feature type="cross-link" description="Glycyl lysine isopeptide (Lys-Gly) (interchain with G-Cter in SUMO2)" evidence="1">
    <location>
        <position position="139"/>
    </location>
</feature>
<feature type="sequence conflict" description="In Ref. 1; AAA18894." evidence="6" ref="1">
    <original>R</original>
    <variation>G</variation>
    <location>
        <position position="180"/>
    </location>
</feature>
<name>CDK1_BOVIN</name>
<gene>
    <name type="primary">CDK1</name>
    <name type="synonym">CDC2</name>
    <name type="synonym">CDKN1</name>
</gene>
<dbReference type="EC" id="2.7.11.22" evidence="1"/>
<dbReference type="EC" id="2.7.11.23" evidence="2"/>
<dbReference type="EMBL" id="L26547">
    <property type="protein sequence ID" value="AAA18894.1"/>
    <property type="molecule type" value="mRNA"/>
</dbReference>
<dbReference type="EMBL" id="BC110151">
    <property type="protein sequence ID" value="AAI10152.1"/>
    <property type="molecule type" value="mRNA"/>
</dbReference>
<dbReference type="PIR" id="I45977">
    <property type="entry name" value="I45977"/>
</dbReference>
<dbReference type="RefSeq" id="NP_776441.1">
    <property type="nucleotide sequence ID" value="NM_174016.2"/>
</dbReference>
<dbReference type="RefSeq" id="XP_005226354.1">
    <property type="nucleotide sequence ID" value="XM_005226297.5"/>
</dbReference>
<dbReference type="RefSeq" id="XP_005226356.1">
    <property type="nucleotide sequence ID" value="XM_005226299.4"/>
</dbReference>
<dbReference type="SMR" id="P48734"/>
<dbReference type="FunCoup" id="P48734">
    <property type="interactions" value="1757"/>
</dbReference>
<dbReference type="STRING" id="9913.ENSBTAP00000013337"/>
<dbReference type="iPTMnet" id="P48734"/>
<dbReference type="PaxDb" id="9913-ENSBTAP00000013337"/>
<dbReference type="Ensembl" id="ENSBTAT00000013337.4">
    <property type="protein sequence ID" value="ENSBTAP00000013337.2"/>
    <property type="gene ID" value="ENSBTAG00000010109.4"/>
</dbReference>
<dbReference type="GeneID" id="281061"/>
<dbReference type="KEGG" id="bta:281061"/>
<dbReference type="CTD" id="983"/>
<dbReference type="VEuPathDB" id="HostDB:ENSBTAG00000010109"/>
<dbReference type="VGNC" id="VGNC:27115">
    <property type="gene designation" value="CDK1"/>
</dbReference>
<dbReference type="eggNOG" id="KOG0594">
    <property type="taxonomic scope" value="Eukaryota"/>
</dbReference>
<dbReference type="GeneTree" id="ENSGT00940000153335"/>
<dbReference type="HOGENOM" id="CLU_000288_181_6_1"/>
<dbReference type="InParanoid" id="P48734"/>
<dbReference type="OMA" id="YLYQITR"/>
<dbReference type="OrthoDB" id="1732493at2759"/>
<dbReference type="TreeFam" id="TF101021"/>
<dbReference type="BRENDA" id="2.7.11.22">
    <property type="organism ID" value="908"/>
</dbReference>
<dbReference type="Reactome" id="R-BTA-110056">
    <property type="pathway name" value="MAPK3 (ERK1) activation"/>
</dbReference>
<dbReference type="Reactome" id="R-BTA-174048">
    <property type="pathway name" value="APC/C:Cdc20 mediated degradation of Cyclin B"/>
</dbReference>
<dbReference type="Reactome" id="R-BTA-174184">
    <property type="pathway name" value="Cdc20:Phospho-APC/C mediated degradation of Cyclin A"/>
</dbReference>
<dbReference type="Reactome" id="R-BTA-176408">
    <property type="pathway name" value="Regulation of APC/C activators between G1/S and early anaphase"/>
</dbReference>
<dbReference type="Reactome" id="R-BTA-176412">
    <property type="pathway name" value="Phosphorylation of the APC/C"/>
</dbReference>
<dbReference type="Reactome" id="R-BTA-176417">
    <property type="pathway name" value="Phosphorylation of Emi1"/>
</dbReference>
<dbReference type="Reactome" id="R-BTA-2299718">
    <property type="pathway name" value="Condensation of Prophase Chromosomes"/>
</dbReference>
<dbReference type="Reactome" id="R-BTA-2500257">
    <property type="pathway name" value="Resolution of Sister Chromatid Cohesion"/>
</dbReference>
<dbReference type="Reactome" id="R-BTA-2565942">
    <property type="pathway name" value="Regulation of PLK1 Activity at G2/M Transition"/>
</dbReference>
<dbReference type="Reactome" id="R-BTA-2980767">
    <property type="pathway name" value="Activation of NIMA Kinases NEK9, NEK6, NEK7"/>
</dbReference>
<dbReference type="Reactome" id="R-BTA-2995383">
    <property type="pathway name" value="Initiation of Nuclear Envelope (NE) Reformation"/>
</dbReference>
<dbReference type="Reactome" id="R-BTA-3301854">
    <property type="pathway name" value="Nuclear Pore Complex (NPC) Disassembly"/>
</dbReference>
<dbReference type="Reactome" id="R-BTA-380259">
    <property type="pathway name" value="Loss of Nlp from mitotic centrosomes"/>
</dbReference>
<dbReference type="Reactome" id="R-BTA-380270">
    <property type="pathway name" value="Recruitment of mitotic centrosome proteins and complexes"/>
</dbReference>
<dbReference type="Reactome" id="R-BTA-380284">
    <property type="pathway name" value="Loss of proteins required for interphase microtubule organization from the centrosome"/>
</dbReference>
<dbReference type="Reactome" id="R-BTA-380320">
    <property type="pathway name" value="Recruitment of NuMA to mitotic centrosomes"/>
</dbReference>
<dbReference type="Reactome" id="R-BTA-4419969">
    <property type="pathway name" value="Depolymerization of the Nuclear Lamina"/>
</dbReference>
<dbReference type="Reactome" id="R-BTA-5620912">
    <property type="pathway name" value="Anchoring of the basal body to the plasma membrane"/>
</dbReference>
<dbReference type="Reactome" id="R-BTA-5687128">
    <property type="pathway name" value="MAPK6/MAPK4 signaling"/>
</dbReference>
<dbReference type="Reactome" id="R-BTA-5689896">
    <property type="pathway name" value="Ovarian tumor domain proteases"/>
</dbReference>
<dbReference type="Reactome" id="R-BTA-6804114">
    <property type="pathway name" value="TP53 Regulates Transcription of Genes Involved in G2 Cell Cycle Arrest"/>
</dbReference>
<dbReference type="Reactome" id="R-BTA-6804757">
    <property type="pathway name" value="Regulation of TP53 Degradation"/>
</dbReference>
<dbReference type="Reactome" id="R-BTA-68875">
    <property type="pathway name" value="Mitotic Prophase"/>
</dbReference>
<dbReference type="Reactome" id="R-BTA-69273">
    <property type="pathway name" value="Cyclin A/B1/B2 associated events during G2/M transition"/>
</dbReference>
<dbReference type="Reactome" id="R-BTA-69478">
    <property type="pathway name" value="G2/M DNA replication checkpoint"/>
</dbReference>
<dbReference type="Reactome" id="R-BTA-75035">
    <property type="pathway name" value="Chk1/Chk2(Cds1) mediated inactivation of Cyclin B:Cdk1 complex"/>
</dbReference>
<dbReference type="Reactome" id="R-BTA-8852276">
    <property type="pathway name" value="The role of GTSE1 in G2/M progression after G2 checkpoint"/>
</dbReference>
<dbReference type="Reactome" id="R-BTA-8854518">
    <property type="pathway name" value="AURKA Activation by TPX2"/>
</dbReference>
<dbReference type="Reactome" id="R-BTA-8878166">
    <property type="pathway name" value="Transcriptional regulation by RUNX2"/>
</dbReference>
<dbReference type="Reactome" id="R-BTA-9833482">
    <property type="pathway name" value="PKR-mediated signaling"/>
</dbReference>
<dbReference type="CD-CODE" id="D7FE2080">
    <property type="entry name" value="Nucleolus"/>
</dbReference>
<dbReference type="Proteomes" id="UP000009136">
    <property type="component" value="Chromosome 28"/>
</dbReference>
<dbReference type="Bgee" id="ENSBTAG00000010109">
    <property type="expression patterns" value="Expressed in oocyte and 106 other cell types or tissues"/>
</dbReference>
<dbReference type="GO" id="GO:0005813">
    <property type="term" value="C:centrosome"/>
    <property type="evidence" value="ECO:0000250"/>
    <property type="project" value="UniProtKB"/>
</dbReference>
<dbReference type="GO" id="GO:0030496">
    <property type="term" value="C:midbody"/>
    <property type="evidence" value="ECO:0000250"/>
    <property type="project" value="AgBase"/>
</dbReference>
<dbReference type="GO" id="GO:0005739">
    <property type="term" value="C:mitochondrion"/>
    <property type="evidence" value="ECO:0007669"/>
    <property type="project" value="UniProtKB-SubCell"/>
</dbReference>
<dbReference type="GO" id="GO:0072686">
    <property type="term" value="C:mitotic spindle"/>
    <property type="evidence" value="ECO:0000250"/>
    <property type="project" value="UniProtKB"/>
</dbReference>
<dbReference type="GO" id="GO:0005634">
    <property type="term" value="C:nucleus"/>
    <property type="evidence" value="ECO:0000250"/>
    <property type="project" value="AgBase"/>
</dbReference>
<dbReference type="GO" id="GO:0005876">
    <property type="term" value="C:spindle microtubule"/>
    <property type="evidence" value="ECO:0000250"/>
    <property type="project" value="AgBase"/>
</dbReference>
<dbReference type="GO" id="GO:0005524">
    <property type="term" value="F:ATP binding"/>
    <property type="evidence" value="ECO:0007669"/>
    <property type="project" value="UniProtKB-KW"/>
</dbReference>
<dbReference type="GO" id="GO:0004693">
    <property type="term" value="F:cyclin-dependent protein serine/threonine kinase activity"/>
    <property type="evidence" value="ECO:0000250"/>
    <property type="project" value="UniProtKB"/>
</dbReference>
<dbReference type="GO" id="GO:0106310">
    <property type="term" value="F:protein serine kinase activity"/>
    <property type="evidence" value="ECO:0007669"/>
    <property type="project" value="RHEA"/>
</dbReference>
<dbReference type="GO" id="GO:0004674">
    <property type="term" value="F:protein serine/threonine kinase activity"/>
    <property type="evidence" value="ECO:0000250"/>
    <property type="project" value="UniProtKB"/>
</dbReference>
<dbReference type="GO" id="GO:0008353">
    <property type="term" value="F:RNA polymerase II CTD heptapeptide repeat kinase activity"/>
    <property type="evidence" value="ECO:0007669"/>
    <property type="project" value="UniProtKB-EC"/>
</dbReference>
<dbReference type="GO" id="GO:0006915">
    <property type="term" value="P:apoptotic process"/>
    <property type="evidence" value="ECO:0007669"/>
    <property type="project" value="UniProtKB-KW"/>
</dbReference>
<dbReference type="GO" id="GO:0051301">
    <property type="term" value="P:cell division"/>
    <property type="evidence" value="ECO:0007669"/>
    <property type="project" value="UniProtKB-KW"/>
</dbReference>
<dbReference type="GO" id="GO:0000086">
    <property type="term" value="P:G2/M transition of mitotic cell cycle"/>
    <property type="evidence" value="ECO:0000250"/>
    <property type="project" value="UniProtKB"/>
</dbReference>
<dbReference type="GO" id="GO:0090166">
    <property type="term" value="P:Golgi disassembly"/>
    <property type="evidence" value="ECO:0000250"/>
    <property type="project" value="UniProtKB"/>
</dbReference>
<dbReference type="GO" id="GO:0007095">
    <property type="term" value="P:mitotic G2 DNA damage checkpoint signaling"/>
    <property type="evidence" value="ECO:0000318"/>
    <property type="project" value="GO_Central"/>
</dbReference>
<dbReference type="GO" id="GO:0043066">
    <property type="term" value="P:negative regulation of apoptotic process"/>
    <property type="evidence" value="ECO:0000250"/>
    <property type="project" value="AgBase"/>
</dbReference>
<dbReference type="GO" id="GO:0018105">
    <property type="term" value="P:peptidyl-serine phosphorylation"/>
    <property type="evidence" value="ECO:0000250"/>
    <property type="project" value="UniProtKB"/>
</dbReference>
<dbReference type="GO" id="GO:0018107">
    <property type="term" value="P:peptidyl-threonine phosphorylation"/>
    <property type="evidence" value="ECO:0000250"/>
    <property type="project" value="UniProtKB"/>
</dbReference>
<dbReference type="GO" id="GO:0034501">
    <property type="term" value="P:protein localization to kinetochore"/>
    <property type="evidence" value="ECO:0000250"/>
    <property type="project" value="UniProtKB"/>
</dbReference>
<dbReference type="GO" id="GO:1902423">
    <property type="term" value="P:regulation of attachment of mitotic spindle microtubules to kinetochore"/>
    <property type="evidence" value="ECO:0000250"/>
    <property type="project" value="UniProtKB"/>
</dbReference>
<dbReference type="GO" id="GO:0042752">
    <property type="term" value="P:regulation of circadian rhythm"/>
    <property type="evidence" value="ECO:0000250"/>
    <property type="project" value="UniProtKB"/>
</dbReference>
<dbReference type="GO" id="GO:0048511">
    <property type="term" value="P:rhythmic process"/>
    <property type="evidence" value="ECO:0007669"/>
    <property type="project" value="UniProtKB-KW"/>
</dbReference>
<dbReference type="CDD" id="cd07861">
    <property type="entry name" value="STKc_CDK1_euk"/>
    <property type="match status" value="1"/>
</dbReference>
<dbReference type="FunFam" id="1.10.510.10:FF:000231">
    <property type="entry name" value="Cyclin-dependent kinase 1"/>
    <property type="match status" value="1"/>
</dbReference>
<dbReference type="FunFam" id="3.30.200.20:FF:000027">
    <property type="entry name" value="Putative Cyclin-dependent kinase 1"/>
    <property type="match status" value="1"/>
</dbReference>
<dbReference type="Gene3D" id="3.30.200.20">
    <property type="entry name" value="Phosphorylase Kinase, domain 1"/>
    <property type="match status" value="1"/>
</dbReference>
<dbReference type="Gene3D" id="1.10.510.10">
    <property type="entry name" value="Transferase(Phosphotransferase) domain 1"/>
    <property type="match status" value="1"/>
</dbReference>
<dbReference type="InterPro" id="IPR050108">
    <property type="entry name" value="CDK"/>
</dbReference>
<dbReference type="InterPro" id="IPR011009">
    <property type="entry name" value="Kinase-like_dom_sf"/>
</dbReference>
<dbReference type="InterPro" id="IPR000719">
    <property type="entry name" value="Prot_kinase_dom"/>
</dbReference>
<dbReference type="InterPro" id="IPR017441">
    <property type="entry name" value="Protein_kinase_ATP_BS"/>
</dbReference>
<dbReference type="InterPro" id="IPR008271">
    <property type="entry name" value="Ser/Thr_kinase_AS"/>
</dbReference>
<dbReference type="PANTHER" id="PTHR24056">
    <property type="entry name" value="CELL DIVISION PROTEIN KINASE"/>
    <property type="match status" value="1"/>
</dbReference>
<dbReference type="PANTHER" id="PTHR24056:SF334">
    <property type="entry name" value="CYCLIN-DEPENDENT KINASE 1"/>
    <property type="match status" value="1"/>
</dbReference>
<dbReference type="Pfam" id="PF00069">
    <property type="entry name" value="Pkinase"/>
    <property type="match status" value="1"/>
</dbReference>
<dbReference type="SMART" id="SM00220">
    <property type="entry name" value="S_TKc"/>
    <property type="match status" value="1"/>
</dbReference>
<dbReference type="SUPFAM" id="SSF56112">
    <property type="entry name" value="Protein kinase-like (PK-like)"/>
    <property type="match status" value="1"/>
</dbReference>
<dbReference type="PROSITE" id="PS00107">
    <property type="entry name" value="PROTEIN_KINASE_ATP"/>
    <property type="match status" value="1"/>
</dbReference>
<dbReference type="PROSITE" id="PS50011">
    <property type="entry name" value="PROTEIN_KINASE_DOM"/>
    <property type="match status" value="1"/>
</dbReference>
<dbReference type="PROSITE" id="PS00108">
    <property type="entry name" value="PROTEIN_KINASE_ST"/>
    <property type="match status" value="1"/>
</dbReference>
<reference key="1">
    <citation type="journal article" date="1994" name="Gene">
        <title>Identification of cDNAs encoding bovine cyclin B and Cdk1/Cdc2.</title>
        <authorList>
            <person name="Yang L.I."/>
            <person name="Farin C.E."/>
        </authorList>
    </citation>
    <scope>NUCLEOTIDE SEQUENCE [MRNA]</scope>
</reference>
<reference key="2">
    <citation type="submission" date="2005-11" db="EMBL/GenBank/DDBJ databases">
        <authorList>
            <consortium name="NIH - Mammalian Gene Collection (MGC) project"/>
        </authorList>
    </citation>
    <scope>NUCLEOTIDE SEQUENCE [LARGE SCALE MRNA]</scope>
    <source>
        <strain>Crossbred X Angus</strain>
        <tissue>Liver</tissue>
    </source>
</reference>
<keyword id="KW-0007">Acetylation</keyword>
<keyword id="KW-0053">Apoptosis</keyword>
<keyword id="KW-0067">ATP-binding</keyword>
<keyword id="KW-0090">Biological rhythms</keyword>
<keyword id="KW-0131">Cell cycle</keyword>
<keyword id="KW-0132">Cell division</keyword>
<keyword id="KW-0963">Cytoplasm</keyword>
<keyword id="KW-0206">Cytoskeleton</keyword>
<keyword id="KW-1017">Isopeptide bond</keyword>
<keyword id="KW-0418">Kinase</keyword>
<keyword id="KW-0496">Mitochondrion</keyword>
<keyword id="KW-0498">Mitosis</keyword>
<keyword id="KW-0547">Nucleotide-binding</keyword>
<keyword id="KW-0539">Nucleus</keyword>
<keyword id="KW-0597">Phosphoprotein</keyword>
<keyword id="KW-1185">Reference proteome</keyword>
<keyword id="KW-0723">Serine/threonine-protein kinase</keyword>
<keyword id="KW-0808">Transferase</keyword>
<keyword id="KW-0832">Ubl conjugation</keyword>